<keyword id="KW-0520">NAD</keyword>
<keyword id="KW-0560">Oxidoreductase</keyword>
<keyword id="KW-1185">Reference proteome</keyword>
<keyword id="KW-0816">Tricarboxylic acid cycle</keyword>
<protein>
    <recommendedName>
        <fullName evidence="1">Malate dehydrogenase</fullName>
        <ecNumber evidence="1">1.1.1.37</ecNumber>
    </recommendedName>
</protein>
<sequence>MSSPIRIAVTGAAGQISYSLLFRIAAGDMLGSSQPVILQLLDIPESGKVLDGVLMELQDCAFPLLTDIIVTHDPMIAFDQADIAILVGARPRGKGMERKDLLQTNGEIFREQGRALNQVVKRDAKILVVGNPANTNTLITMKNAPDLSPENFSGMLRLDHNRALSQVAMKLNQPVSHIRKMIVWGNHSSTQFPDLSHAEIDHQKVIDLIKDQTWVENSFIPTVQNRGAVVIEARGLSSAASAANAIIDHMRDWIFGTRDDDWITMGILSDGSYKIPKGVIYGFPVVCKNGGRKIVQGLEISPFSRTRLDIAYDELTQELDSIKHLLL</sequence>
<organism>
    <name type="scientific">Nitrosomonas europaea (strain ATCC 19718 / CIP 103999 / KCTC 2705 / NBRC 14298)</name>
    <dbReference type="NCBI Taxonomy" id="228410"/>
    <lineage>
        <taxon>Bacteria</taxon>
        <taxon>Pseudomonadati</taxon>
        <taxon>Pseudomonadota</taxon>
        <taxon>Betaproteobacteria</taxon>
        <taxon>Nitrosomonadales</taxon>
        <taxon>Nitrosomonadaceae</taxon>
        <taxon>Nitrosomonas</taxon>
    </lineage>
</organism>
<gene>
    <name evidence="1" type="primary">mdh</name>
    <name type="ordered locus">NE0773</name>
</gene>
<evidence type="ECO:0000255" key="1">
    <source>
        <dbReference type="HAMAP-Rule" id="MF_01517"/>
    </source>
</evidence>
<accession>Q82WB9</accession>
<feature type="chain" id="PRO_0000113382" description="Malate dehydrogenase">
    <location>
        <begin position="1"/>
        <end position="327"/>
    </location>
</feature>
<feature type="active site" description="Proton acceptor" evidence="1">
    <location>
        <position position="187"/>
    </location>
</feature>
<feature type="binding site" evidence="1">
    <location>
        <begin position="11"/>
        <end position="17"/>
    </location>
    <ligand>
        <name>NAD(+)</name>
        <dbReference type="ChEBI" id="CHEBI:57540"/>
    </ligand>
</feature>
<feature type="binding site" evidence="1">
    <location>
        <position position="92"/>
    </location>
    <ligand>
        <name>substrate</name>
    </ligand>
</feature>
<feature type="binding site" evidence="1">
    <location>
        <position position="98"/>
    </location>
    <ligand>
        <name>substrate</name>
    </ligand>
</feature>
<feature type="binding site" evidence="1">
    <location>
        <position position="105"/>
    </location>
    <ligand>
        <name>NAD(+)</name>
        <dbReference type="ChEBI" id="CHEBI:57540"/>
    </ligand>
</feature>
<feature type="binding site" evidence="1">
    <location>
        <position position="112"/>
    </location>
    <ligand>
        <name>NAD(+)</name>
        <dbReference type="ChEBI" id="CHEBI:57540"/>
    </ligand>
</feature>
<feature type="binding site" evidence="1">
    <location>
        <begin position="129"/>
        <end position="131"/>
    </location>
    <ligand>
        <name>NAD(+)</name>
        <dbReference type="ChEBI" id="CHEBI:57540"/>
    </ligand>
</feature>
<feature type="binding site" evidence="1">
    <location>
        <position position="131"/>
    </location>
    <ligand>
        <name>substrate</name>
    </ligand>
</feature>
<feature type="binding site" evidence="1">
    <location>
        <position position="162"/>
    </location>
    <ligand>
        <name>substrate</name>
    </ligand>
</feature>
<dbReference type="EC" id="1.1.1.37" evidence="1"/>
<dbReference type="EMBL" id="AL954747">
    <property type="protein sequence ID" value="CAD84684.1"/>
    <property type="molecule type" value="Genomic_DNA"/>
</dbReference>
<dbReference type="RefSeq" id="WP_011111385.1">
    <property type="nucleotide sequence ID" value="NC_004757.1"/>
</dbReference>
<dbReference type="SMR" id="Q82WB9"/>
<dbReference type="STRING" id="228410.NE0773"/>
<dbReference type="GeneID" id="87103965"/>
<dbReference type="KEGG" id="neu:NE0773"/>
<dbReference type="eggNOG" id="COG0039">
    <property type="taxonomic scope" value="Bacteria"/>
</dbReference>
<dbReference type="HOGENOM" id="CLU_040727_2_0_4"/>
<dbReference type="OrthoDB" id="9802969at2"/>
<dbReference type="PhylomeDB" id="Q82WB9"/>
<dbReference type="Proteomes" id="UP000001416">
    <property type="component" value="Chromosome"/>
</dbReference>
<dbReference type="GO" id="GO:0030060">
    <property type="term" value="F:L-malate dehydrogenase (NAD+) activity"/>
    <property type="evidence" value="ECO:0007669"/>
    <property type="project" value="UniProtKB-UniRule"/>
</dbReference>
<dbReference type="GO" id="GO:0006108">
    <property type="term" value="P:malate metabolic process"/>
    <property type="evidence" value="ECO:0007669"/>
    <property type="project" value="InterPro"/>
</dbReference>
<dbReference type="GO" id="GO:0006099">
    <property type="term" value="P:tricarboxylic acid cycle"/>
    <property type="evidence" value="ECO:0007669"/>
    <property type="project" value="UniProtKB-UniRule"/>
</dbReference>
<dbReference type="CDD" id="cd01338">
    <property type="entry name" value="MDH_chloroplast-like"/>
    <property type="match status" value="1"/>
</dbReference>
<dbReference type="FunFam" id="3.40.50.720:FF:000010">
    <property type="entry name" value="Malate dehydrogenase"/>
    <property type="match status" value="1"/>
</dbReference>
<dbReference type="FunFam" id="3.90.110.10:FF:000002">
    <property type="entry name" value="Malate dehydrogenase"/>
    <property type="match status" value="1"/>
</dbReference>
<dbReference type="Gene3D" id="3.90.110.10">
    <property type="entry name" value="Lactate dehydrogenase/glycoside hydrolase, family 4, C-terminal"/>
    <property type="match status" value="1"/>
</dbReference>
<dbReference type="Gene3D" id="3.40.50.720">
    <property type="entry name" value="NAD(P)-binding Rossmann-like Domain"/>
    <property type="match status" value="1"/>
</dbReference>
<dbReference type="HAMAP" id="MF_01517">
    <property type="entry name" value="Malate_dehydrog_2"/>
    <property type="match status" value="1"/>
</dbReference>
<dbReference type="InterPro" id="IPR001557">
    <property type="entry name" value="L-lactate/malate_DH"/>
</dbReference>
<dbReference type="InterPro" id="IPR022383">
    <property type="entry name" value="Lactate/malate_DH_C"/>
</dbReference>
<dbReference type="InterPro" id="IPR001236">
    <property type="entry name" value="Lactate/malate_DH_N"/>
</dbReference>
<dbReference type="InterPro" id="IPR015955">
    <property type="entry name" value="Lactate_DH/Glyco_Ohase_4_C"/>
</dbReference>
<dbReference type="InterPro" id="IPR010945">
    <property type="entry name" value="Malate_DH_type2"/>
</dbReference>
<dbReference type="InterPro" id="IPR036291">
    <property type="entry name" value="NAD(P)-bd_dom_sf"/>
</dbReference>
<dbReference type="NCBIfam" id="TIGR01759">
    <property type="entry name" value="MalateDH-SF1"/>
    <property type="match status" value="1"/>
</dbReference>
<dbReference type="NCBIfam" id="NF003916">
    <property type="entry name" value="PRK05442.1"/>
    <property type="match status" value="1"/>
</dbReference>
<dbReference type="PANTHER" id="PTHR23382">
    <property type="entry name" value="MALATE DEHYDROGENASE"/>
    <property type="match status" value="1"/>
</dbReference>
<dbReference type="Pfam" id="PF02866">
    <property type="entry name" value="Ldh_1_C"/>
    <property type="match status" value="1"/>
</dbReference>
<dbReference type="Pfam" id="PF00056">
    <property type="entry name" value="Ldh_1_N"/>
    <property type="match status" value="1"/>
</dbReference>
<dbReference type="PIRSF" id="PIRSF000102">
    <property type="entry name" value="Lac_mal_DH"/>
    <property type="match status" value="1"/>
</dbReference>
<dbReference type="SUPFAM" id="SSF56327">
    <property type="entry name" value="LDH C-terminal domain-like"/>
    <property type="match status" value="1"/>
</dbReference>
<dbReference type="SUPFAM" id="SSF51735">
    <property type="entry name" value="NAD(P)-binding Rossmann-fold domains"/>
    <property type="match status" value="1"/>
</dbReference>
<proteinExistence type="inferred from homology"/>
<comment type="function">
    <text evidence="1">Catalyzes the reversible oxidation of malate to oxaloacetate.</text>
</comment>
<comment type="catalytic activity">
    <reaction evidence="1">
        <text>(S)-malate + NAD(+) = oxaloacetate + NADH + H(+)</text>
        <dbReference type="Rhea" id="RHEA:21432"/>
        <dbReference type="ChEBI" id="CHEBI:15378"/>
        <dbReference type="ChEBI" id="CHEBI:15589"/>
        <dbReference type="ChEBI" id="CHEBI:16452"/>
        <dbReference type="ChEBI" id="CHEBI:57540"/>
        <dbReference type="ChEBI" id="CHEBI:57945"/>
        <dbReference type="EC" id="1.1.1.37"/>
    </reaction>
</comment>
<comment type="similarity">
    <text evidence="1">Belongs to the LDH/MDH superfamily. MDH type 2 family.</text>
</comment>
<reference key="1">
    <citation type="journal article" date="2003" name="J. Bacteriol.">
        <title>Complete genome sequence of the ammonia-oxidizing bacterium and obligate chemolithoautotroph Nitrosomonas europaea.</title>
        <authorList>
            <person name="Chain P."/>
            <person name="Lamerdin J.E."/>
            <person name="Larimer F.W."/>
            <person name="Regala W."/>
            <person name="Lao V."/>
            <person name="Land M.L."/>
            <person name="Hauser L."/>
            <person name="Hooper A.B."/>
            <person name="Klotz M.G."/>
            <person name="Norton J."/>
            <person name="Sayavedra-Soto L.A."/>
            <person name="Arciero D.M."/>
            <person name="Hommes N.G."/>
            <person name="Whittaker M.M."/>
            <person name="Arp D.J."/>
        </authorList>
    </citation>
    <scope>NUCLEOTIDE SEQUENCE [LARGE SCALE GENOMIC DNA]</scope>
    <source>
        <strain>ATCC 19718 / CIP 103999 / KCTC 2705 / NBRC 14298</strain>
    </source>
</reference>
<name>MDH_NITEU</name>